<name>AIMP2_DROME</name>
<accession>Q9VUR3</accession>
<protein>
    <recommendedName>
        <fullName>Probable aminoacyl tRNA synthase complex-interacting multifunctional protein 2</fullName>
    </recommendedName>
    <alternativeName>
        <fullName>Probable multisynthase complex auxiliary component p38</fullName>
    </alternativeName>
    <alternativeName>
        <fullName evidence="2">aaRS-interacting multifunctional protein 2</fullName>
    </alternativeName>
</protein>
<feature type="chain" id="PRO_0000221130" description="Probable aminoacyl tRNA synthase complex-interacting multifunctional protein 2">
    <location>
        <begin position="1"/>
        <end position="334"/>
    </location>
</feature>
<feature type="domain" description="GST C-terminal">
    <location>
        <begin position="280"/>
        <end position="327"/>
    </location>
</feature>
<evidence type="ECO:0000250" key="1"/>
<evidence type="ECO:0000312" key="2">
    <source>
        <dbReference type="FlyBase" id="FBgn0036515"/>
    </source>
</evidence>
<dbReference type="EMBL" id="AE014296">
    <property type="protein sequence ID" value="AAF49612.1"/>
    <property type="molecule type" value="Genomic_DNA"/>
</dbReference>
<dbReference type="RefSeq" id="NP_648782.2">
    <property type="nucleotide sequence ID" value="NM_140525.4"/>
</dbReference>
<dbReference type="SMR" id="Q9VUR3"/>
<dbReference type="BioGRID" id="65009">
    <property type="interactions" value="12"/>
</dbReference>
<dbReference type="DIP" id="DIP-20389N"/>
<dbReference type="FunCoup" id="Q9VUR3">
    <property type="interactions" value="379"/>
</dbReference>
<dbReference type="IntAct" id="Q9VUR3">
    <property type="interactions" value="11"/>
</dbReference>
<dbReference type="STRING" id="7227.FBpp0075318"/>
<dbReference type="PaxDb" id="7227-FBpp0075318"/>
<dbReference type="DNASU" id="39690"/>
<dbReference type="EnsemblMetazoa" id="FBtr0075565">
    <property type="protein sequence ID" value="FBpp0075318"/>
    <property type="gene ID" value="FBgn0036515"/>
</dbReference>
<dbReference type="GeneID" id="39690"/>
<dbReference type="KEGG" id="dme:Dmel_CG12304"/>
<dbReference type="UCSC" id="CG12304-RA">
    <property type="organism name" value="d. melanogaster"/>
</dbReference>
<dbReference type="AGR" id="FB:FBgn0036515"/>
<dbReference type="CTD" id="7965"/>
<dbReference type="FlyBase" id="FBgn0036515">
    <property type="gene designation" value="AIMP2"/>
</dbReference>
<dbReference type="VEuPathDB" id="VectorBase:FBgn0036515"/>
<dbReference type="eggNOG" id="ENOG502QUNJ">
    <property type="taxonomic scope" value="Eukaryota"/>
</dbReference>
<dbReference type="GeneTree" id="ENSGT00390000015826"/>
<dbReference type="InParanoid" id="Q9VUR3"/>
<dbReference type="OMA" id="LCQHYRV"/>
<dbReference type="OrthoDB" id="424586at2759"/>
<dbReference type="PhylomeDB" id="Q9VUR3"/>
<dbReference type="Reactome" id="R-DME-9856649">
    <property type="pathway name" value="Transcriptional and post-translational regulation of MITF-M expression and activity"/>
</dbReference>
<dbReference type="BioGRID-ORCS" id="39690">
    <property type="hits" value="0 hits in 1 CRISPR screen"/>
</dbReference>
<dbReference type="GenomeRNAi" id="39690"/>
<dbReference type="PRO" id="PR:Q9VUR3"/>
<dbReference type="Proteomes" id="UP000000803">
    <property type="component" value="Chromosome 3L"/>
</dbReference>
<dbReference type="Bgee" id="FBgn0036515">
    <property type="expression patterns" value="Expressed in eye disc (Drosophila) and 145 other cell types or tissues"/>
</dbReference>
<dbReference type="ExpressionAtlas" id="Q9VUR3">
    <property type="expression patterns" value="baseline and differential"/>
</dbReference>
<dbReference type="GO" id="GO:0017101">
    <property type="term" value="C:aminoacyl-tRNA synthetase multienzyme complex"/>
    <property type="evidence" value="ECO:0000318"/>
    <property type="project" value="GO_Central"/>
</dbReference>
<dbReference type="GO" id="GO:0005829">
    <property type="term" value="C:cytosol"/>
    <property type="evidence" value="ECO:0007669"/>
    <property type="project" value="UniProtKB-SubCell"/>
</dbReference>
<dbReference type="GO" id="GO:0005634">
    <property type="term" value="C:nucleus"/>
    <property type="evidence" value="ECO:0007669"/>
    <property type="project" value="UniProtKB-SubCell"/>
</dbReference>
<dbReference type="GO" id="GO:0006412">
    <property type="term" value="P:translation"/>
    <property type="evidence" value="ECO:0007669"/>
    <property type="project" value="UniProtKB-KW"/>
</dbReference>
<dbReference type="CDD" id="cd00299">
    <property type="entry name" value="GST_C_family"/>
    <property type="match status" value="1"/>
</dbReference>
<dbReference type="Gene3D" id="1.20.1050.130">
    <property type="match status" value="1"/>
</dbReference>
<dbReference type="InterPro" id="IPR042360">
    <property type="entry name" value="AIMP2"/>
</dbReference>
<dbReference type="InterPro" id="IPR041503">
    <property type="entry name" value="AIMP2_thioredoxin"/>
</dbReference>
<dbReference type="InterPro" id="IPR036282">
    <property type="entry name" value="Glutathione-S-Trfase_C_sf"/>
</dbReference>
<dbReference type="PANTHER" id="PTHR13438">
    <property type="entry name" value="AMINOACYL TRNA SYNTHASE COMPLEX-INTERACTING MULTIFUNCTIONAL PROTEIN"/>
    <property type="match status" value="1"/>
</dbReference>
<dbReference type="PANTHER" id="PTHR13438:SF2">
    <property type="entry name" value="AMINOACYL TRNA SYNTHASE COMPLEX-INTERACTING MULTIFUNCTIONAL PROTEIN 2"/>
    <property type="match status" value="1"/>
</dbReference>
<dbReference type="Pfam" id="PF18569">
    <property type="entry name" value="Thioredoxin_16"/>
    <property type="match status" value="1"/>
</dbReference>
<dbReference type="SUPFAM" id="SSF47616">
    <property type="entry name" value="GST C-terminal domain-like"/>
    <property type="match status" value="1"/>
</dbReference>
<reference key="1">
    <citation type="journal article" date="2000" name="Science">
        <title>The genome sequence of Drosophila melanogaster.</title>
        <authorList>
            <person name="Adams M.D."/>
            <person name="Celniker S.E."/>
            <person name="Holt R.A."/>
            <person name="Evans C.A."/>
            <person name="Gocayne J.D."/>
            <person name="Amanatides P.G."/>
            <person name="Scherer S.E."/>
            <person name="Li P.W."/>
            <person name="Hoskins R.A."/>
            <person name="Galle R.F."/>
            <person name="George R.A."/>
            <person name="Lewis S.E."/>
            <person name="Richards S."/>
            <person name="Ashburner M."/>
            <person name="Henderson S.N."/>
            <person name="Sutton G.G."/>
            <person name="Wortman J.R."/>
            <person name="Yandell M.D."/>
            <person name="Zhang Q."/>
            <person name="Chen L.X."/>
            <person name="Brandon R.C."/>
            <person name="Rogers Y.-H.C."/>
            <person name="Blazej R.G."/>
            <person name="Champe M."/>
            <person name="Pfeiffer B.D."/>
            <person name="Wan K.H."/>
            <person name="Doyle C."/>
            <person name="Baxter E.G."/>
            <person name="Helt G."/>
            <person name="Nelson C.R."/>
            <person name="Miklos G.L.G."/>
            <person name="Abril J.F."/>
            <person name="Agbayani A."/>
            <person name="An H.-J."/>
            <person name="Andrews-Pfannkoch C."/>
            <person name="Baldwin D."/>
            <person name="Ballew R.M."/>
            <person name="Basu A."/>
            <person name="Baxendale J."/>
            <person name="Bayraktaroglu L."/>
            <person name="Beasley E.M."/>
            <person name="Beeson K.Y."/>
            <person name="Benos P.V."/>
            <person name="Berman B.P."/>
            <person name="Bhandari D."/>
            <person name="Bolshakov S."/>
            <person name="Borkova D."/>
            <person name="Botchan M.R."/>
            <person name="Bouck J."/>
            <person name="Brokstein P."/>
            <person name="Brottier P."/>
            <person name="Burtis K.C."/>
            <person name="Busam D.A."/>
            <person name="Butler H."/>
            <person name="Cadieu E."/>
            <person name="Center A."/>
            <person name="Chandra I."/>
            <person name="Cherry J.M."/>
            <person name="Cawley S."/>
            <person name="Dahlke C."/>
            <person name="Davenport L.B."/>
            <person name="Davies P."/>
            <person name="de Pablos B."/>
            <person name="Delcher A."/>
            <person name="Deng Z."/>
            <person name="Mays A.D."/>
            <person name="Dew I."/>
            <person name="Dietz S.M."/>
            <person name="Dodson K."/>
            <person name="Doup L.E."/>
            <person name="Downes M."/>
            <person name="Dugan-Rocha S."/>
            <person name="Dunkov B.C."/>
            <person name="Dunn P."/>
            <person name="Durbin K.J."/>
            <person name="Evangelista C.C."/>
            <person name="Ferraz C."/>
            <person name="Ferriera S."/>
            <person name="Fleischmann W."/>
            <person name="Fosler C."/>
            <person name="Gabrielian A.E."/>
            <person name="Garg N.S."/>
            <person name="Gelbart W.M."/>
            <person name="Glasser K."/>
            <person name="Glodek A."/>
            <person name="Gong F."/>
            <person name="Gorrell J.H."/>
            <person name="Gu Z."/>
            <person name="Guan P."/>
            <person name="Harris M."/>
            <person name="Harris N.L."/>
            <person name="Harvey D.A."/>
            <person name="Heiman T.J."/>
            <person name="Hernandez J.R."/>
            <person name="Houck J."/>
            <person name="Hostin D."/>
            <person name="Houston K.A."/>
            <person name="Howland T.J."/>
            <person name="Wei M.-H."/>
            <person name="Ibegwam C."/>
            <person name="Jalali M."/>
            <person name="Kalush F."/>
            <person name="Karpen G.H."/>
            <person name="Ke Z."/>
            <person name="Kennison J.A."/>
            <person name="Ketchum K.A."/>
            <person name="Kimmel B.E."/>
            <person name="Kodira C.D."/>
            <person name="Kraft C.L."/>
            <person name="Kravitz S."/>
            <person name="Kulp D."/>
            <person name="Lai Z."/>
            <person name="Lasko P."/>
            <person name="Lei Y."/>
            <person name="Levitsky A.A."/>
            <person name="Li J.H."/>
            <person name="Li Z."/>
            <person name="Liang Y."/>
            <person name="Lin X."/>
            <person name="Liu X."/>
            <person name="Mattei B."/>
            <person name="McIntosh T.C."/>
            <person name="McLeod M.P."/>
            <person name="McPherson D."/>
            <person name="Merkulov G."/>
            <person name="Milshina N.V."/>
            <person name="Mobarry C."/>
            <person name="Morris J."/>
            <person name="Moshrefi A."/>
            <person name="Mount S.M."/>
            <person name="Moy M."/>
            <person name="Murphy B."/>
            <person name="Murphy L."/>
            <person name="Muzny D.M."/>
            <person name="Nelson D.L."/>
            <person name="Nelson D.R."/>
            <person name="Nelson K.A."/>
            <person name="Nixon K."/>
            <person name="Nusskern D.R."/>
            <person name="Pacleb J.M."/>
            <person name="Palazzolo M."/>
            <person name="Pittman G.S."/>
            <person name="Pan S."/>
            <person name="Pollard J."/>
            <person name="Puri V."/>
            <person name="Reese M.G."/>
            <person name="Reinert K."/>
            <person name="Remington K."/>
            <person name="Saunders R.D.C."/>
            <person name="Scheeler F."/>
            <person name="Shen H."/>
            <person name="Shue B.C."/>
            <person name="Siden-Kiamos I."/>
            <person name="Simpson M."/>
            <person name="Skupski M.P."/>
            <person name="Smith T.J."/>
            <person name="Spier E."/>
            <person name="Spradling A.C."/>
            <person name="Stapleton M."/>
            <person name="Strong R."/>
            <person name="Sun E."/>
            <person name="Svirskas R."/>
            <person name="Tector C."/>
            <person name="Turner R."/>
            <person name="Venter E."/>
            <person name="Wang A.H."/>
            <person name="Wang X."/>
            <person name="Wang Z.-Y."/>
            <person name="Wassarman D.A."/>
            <person name="Weinstock G.M."/>
            <person name="Weissenbach J."/>
            <person name="Williams S.M."/>
            <person name="Woodage T."/>
            <person name="Worley K.C."/>
            <person name="Wu D."/>
            <person name="Yang S."/>
            <person name="Yao Q.A."/>
            <person name="Ye J."/>
            <person name="Yeh R.-F."/>
            <person name="Zaveri J.S."/>
            <person name="Zhan M."/>
            <person name="Zhang G."/>
            <person name="Zhao Q."/>
            <person name="Zheng L."/>
            <person name="Zheng X.H."/>
            <person name="Zhong F.N."/>
            <person name="Zhong W."/>
            <person name="Zhou X."/>
            <person name="Zhu S.C."/>
            <person name="Zhu X."/>
            <person name="Smith H.O."/>
            <person name="Gibbs R.A."/>
            <person name="Myers E.W."/>
            <person name="Rubin G.M."/>
            <person name="Venter J.C."/>
        </authorList>
    </citation>
    <scope>NUCLEOTIDE SEQUENCE [LARGE SCALE GENOMIC DNA]</scope>
    <source>
        <strain>Berkeley</strain>
    </source>
</reference>
<reference key="2">
    <citation type="journal article" date="2002" name="Genome Biol.">
        <title>Annotation of the Drosophila melanogaster euchromatic genome: a systematic review.</title>
        <authorList>
            <person name="Misra S."/>
            <person name="Crosby M.A."/>
            <person name="Mungall C.J."/>
            <person name="Matthews B.B."/>
            <person name="Campbell K.S."/>
            <person name="Hradecky P."/>
            <person name="Huang Y."/>
            <person name="Kaminker J.S."/>
            <person name="Millburn G.H."/>
            <person name="Prochnik S.E."/>
            <person name="Smith C.D."/>
            <person name="Tupy J.L."/>
            <person name="Whitfield E.J."/>
            <person name="Bayraktaroglu L."/>
            <person name="Berman B.P."/>
            <person name="Bettencourt B.R."/>
            <person name="Celniker S.E."/>
            <person name="de Grey A.D.N.J."/>
            <person name="Drysdale R.A."/>
            <person name="Harris N.L."/>
            <person name="Richter J."/>
            <person name="Russo S."/>
            <person name="Schroeder A.J."/>
            <person name="Shu S.Q."/>
            <person name="Stapleton M."/>
            <person name="Yamada C."/>
            <person name="Ashburner M."/>
            <person name="Gelbart W.M."/>
            <person name="Rubin G.M."/>
            <person name="Lewis S.E."/>
        </authorList>
    </citation>
    <scope>GENOME REANNOTATION</scope>
    <source>
        <strain>Berkeley</strain>
    </source>
</reference>
<keyword id="KW-0963">Cytoplasm</keyword>
<keyword id="KW-0539">Nucleus</keyword>
<keyword id="KW-0648">Protein biosynthesis</keyword>
<keyword id="KW-1185">Reference proteome</keyword>
<proteinExistence type="evidence at protein level"/>
<sequence length="334" mass="36934">MYELKTLLPQFDIKLPTCMYPLKNVSLAADSLASGSSTSASTSASTSSCKLEANRIDRTGRNAATCALDLDSLGRQIQRLLKDDTASVAARQEKVLKQLEELKAQLGQIRAGLGVCGKTFQHTTAFQNGGLKEVPLQDVVINGHPNFIPYALLALKNAWRNLYTIDVKTFTHSTMADIGPAAREFEANLAKVPVNPALPKISVTLIWKNCEHTEMISSPTMYVPIYGEVNIIRYLGRVGPAEYRYEGSPLCNEIDLVLDICYQLLRCNTHKTQVAMVRLLDKRLQKQQYFGGSQMSVADVGVYSSLIRMPAVTEKDLTPALVAWRKRAKLVVQI</sequence>
<organism>
    <name type="scientific">Drosophila melanogaster</name>
    <name type="common">Fruit fly</name>
    <dbReference type="NCBI Taxonomy" id="7227"/>
    <lineage>
        <taxon>Eukaryota</taxon>
        <taxon>Metazoa</taxon>
        <taxon>Ecdysozoa</taxon>
        <taxon>Arthropoda</taxon>
        <taxon>Hexapoda</taxon>
        <taxon>Insecta</taxon>
        <taxon>Pterygota</taxon>
        <taxon>Neoptera</taxon>
        <taxon>Endopterygota</taxon>
        <taxon>Diptera</taxon>
        <taxon>Brachycera</taxon>
        <taxon>Muscomorpha</taxon>
        <taxon>Ephydroidea</taxon>
        <taxon>Drosophilidae</taxon>
        <taxon>Drosophila</taxon>
        <taxon>Sophophora</taxon>
    </lineage>
</organism>
<comment type="function">
    <text evidence="1">Required for assembly and stability of the aminoacyl-tRNA synthase complex.</text>
</comment>
<comment type="subunit">
    <text evidence="1">Component of the aminoacyl-tRNA synthase complex which is comprised of a bifunctional glutamyl-prolyl-tRNA synthase, the monospecific isoleucyl, leucyl, glutaminyl, methionyl, lysyl, arginyl and aspartyl-tRNA synthases, and three auxiliary proteins.</text>
</comment>
<comment type="interaction">
    <interactant intactId="EBI-96472">
        <id>Q9VUR3</id>
    </interactant>
    <interactant intactId="EBI-128833">
        <id>Q7K0E6</id>
        <label>AspRS</label>
    </interactant>
    <organismsDiffer>false</organismsDiffer>
    <experiments>3</experiments>
</comment>
<comment type="subcellular location">
    <subcellularLocation>
        <location evidence="1">Cytoplasm</location>
        <location evidence="1">Cytosol</location>
    </subcellularLocation>
    <subcellularLocation>
        <location evidence="1">Nucleus</location>
    </subcellularLocation>
</comment>
<gene>
    <name evidence="2" type="primary">AIMP2</name>
    <name evidence="2" type="ORF">CG12304</name>
</gene>